<sequence>MLQRSRLLWLAVFITLWVSSDAQDDAKEEENTFDLLQISNINRKTIGAKLFRGPDPAIPAYRFIRFDHIPPFKPEKLKKIVKLIRQNEGFILSATLRQDRQSRGTILALEGPGISERQFEIISNGRANTLDLIYWVDGFQNVISLEDVDLADSQWKNLTVQVTGENYNLYVGCDLIDSFILEEPFYEQLKAENSRMYVAKGSIRENHFRGLLQNIHLIFDTSIEDVLRKKGCQRSQSTEVNTINESTEILHLSPAVTTEYVGEKTEKKAEFCDRSCEELGTMFTELTGLRIVVNNLADNLQKVSEENQIMWELIGPNKTLKNQSVCWQDGRVFADSESWIVDSCTKCTCQDSKIVCHQITCPPVSCADPSFIEGECCPVCSHSDDSEEGWSPWSDWTKCSVTCGSGTQMRGRSCDVTRSACTGPHIQTRMCSFKKCDHRIRQDGGWSHWSPWSSCSVTCGVGNITRIRLCNSPIPQMGGKNCVGNGRETEKCEKAPCPVNGQWGPWSPWSACTVTCGGGIRERSRLCNSPEPQYGGKPCVGDTKQHDMCNKRDCPIDGCLSNPCFPGAECNSYPDGSWSCGPCPAGFLGNGTVCEDLDECIAVSDVCFKVNQVHRCVNTNPGFHCLPCPPRYKGSQPYGVGLEVAKTEKQVCEPENPCKDKTHSCHKSAECIYLGHFSDPMYKCECRTGYAGDGRICGEDSDLDGWPNNNLVCAANATYHCVKDNCPLLPNSGQEDFDKDGKGDACDEDDDNDGVEDDKDNCPLLFNPRQFDYDKDEVGDRCDNCPYVHNPAQIDTDNNGEGDSCAVDIDGDDIFNERDNCPYVYNTDQSDTDGDGVGDQCDNCPLMHNPDQTDADNDLVGDQCDNNEDIDEDGHQNNQDNCPYIPNANQADHDKDGKGDACDPDDDNDGIPDDRDNCRLRYNPEQEDSDGDGRGDICKDDFDDDNVPDIFDVCPENNAISETDFRKFQMVPLDPKGTAQIDPNWVIRHQGKELVQTANSDPGIAVGYDEFSSVDFSGTFYVNTDRDDDYAGFVFGYQSSSRFYVLMWKQVTQTYWEDKPTRAYGYSGVSLKVVNSTTGTGEHLRNALWHTGNTPGQVRTLWHDPKNIGWKDYTAYRWHLIHRPKTGLIKVLVYEGKQVMVDSGPIYDTTFAGGRLGLFVFSQEMVYFSDLKYECRDA</sequence>
<accession>P35440</accession>
<gene>
    <name type="primary">THBS2</name>
    <name type="synonym">TSP2</name>
</gene>
<proteinExistence type="evidence at transcript level"/>
<protein>
    <recommendedName>
        <fullName>Thrombospondin-2</fullName>
    </recommendedName>
</protein>
<feature type="signal peptide" evidence="2">
    <location>
        <begin position="1"/>
        <end position="22"/>
    </location>
</feature>
<feature type="chain" id="PRO_0000035848" description="Thrombospondin-2">
    <location>
        <begin position="23"/>
        <end position="1178"/>
    </location>
</feature>
<feature type="domain" description="Laminin G-like">
    <location>
        <begin position="25"/>
        <end position="221"/>
    </location>
</feature>
<feature type="domain" description="VWFC" evidence="5">
    <location>
        <begin position="324"/>
        <end position="381"/>
    </location>
</feature>
<feature type="domain" description="TSP type-1 1" evidence="4">
    <location>
        <begin position="387"/>
        <end position="437"/>
    </location>
</feature>
<feature type="domain" description="TSP type-1 2" evidence="4">
    <location>
        <begin position="443"/>
        <end position="498"/>
    </location>
</feature>
<feature type="domain" description="TSP type-1 3" evidence="4">
    <location>
        <begin position="500"/>
        <end position="555"/>
    </location>
</feature>
<feature type="domain" description="EGF-like 1" evidence="3">
    <location>
        <begin position="555"/>
        <end position="595"/>
    </location>
</feature>
<feature type="domain" description="EGF-like 2" evidence="3">
    <location>
        <begin position="654"/>
        <end position="698"/>
    </location>
</feature>
<feature type="repeat" description="TSP type-3 1">
    <location>
        <begin position="699"/>
        <end position="734"/>
    </location>
</feature>
<feature type="repeat" description="TSP type-3 2">
    <location>
        <begin position="735"/>
        <end position="770"/>
    </location>
</feature>
<feature type="repeat" description="TSP type-3 3">
    <location>
        <begin position="771"/>
        <end position="793"/>
    </location>
</feature>
<feature type="repeat" description="TSP type-3 4">
    <location>
        <begin position="794"/>
        <end position="829"/>
    </location>
</feature>
<feature type="repeat" description="TSP type-3 5">
    <location>
        <begin position="830"/>
        <end position="852"/>
    </location>
</feature>
<feature type="repeat" description="TSP type-3 6">
    <location>
        <begin position="853"/>
        <end position="890"/>
    </location>
</feature>
<feature type="repeat" description="TSP type-3 7">
    <location>
        <begin position="891"/>
        <end position="926"/>
    </location>
</feature>
<feature type="repeat" description="TSP type-3 8">
    <location>
        <begin position="927"/>
        <end position="962"/>
    </location>
</feature>
<feature type="domain" description="TSP C-terminal" evidence="6">
    <location>
        <begin position="966"/>
        <end position="1178"/>
    </location>
</feature>
<feature type="region of interest" description="Disordered" evidence="7">
    <location>
        <begin position="737"/>
        <end position="760"/>
    </location>
</feature>
<feature type="region of interest" description="Disordered" evidence="7">
    <location>
        <begin position="852"/>
        <end position="941"/>
    </location>
</feature>
<feature type="short sequence motif" description="Cell attachment site" evidence="2">
    <location>
        <begin position="934"/>
        <end position="936"/>
    </location>
</feature>
<feature type="compositionally biased region" description="Acidic residues" evidence="7">
    <location>
        <begin position="746"/>
        <end position="759"/>
    </location>
</feature>
<feature type="compositionally biased region" description="Acidic residues" evidence="7">
    <location>
        <begin position="853"/>
        <end position="872"/>
    </location>
</feature>
<feature type="compositionally biased region" description="Basic and acidic residues" evidence="7">
    <location>
        <begin position="891"/>
        <end position="901"/>
    </location>
</feature>
<feature type="compositionally biased region" description="Acidic residues" evidence="7">
    <location>
        <begin position="902"/>
        <end position="911"/>
    </location>
</feature>
<feature type="compositionally biased region" description="Basic and acidic residues" evidence="7">
    <location>
        <begin position="912"/>
        <end position="924"/>
    </location>
</feature>
<feature type="compositionally biased region" description="Basic and acidic residues" evidence="7">
    <location>
        <begin position="931"/>
        <end position="940"/>
    </location>
</feature>
<feature type="binding site" evidence="2">
    <location>
        <begin status="unknown"/>
        <end position="232"/>
    </location>
    <ligand>
        <name>heparin</name>
        <dbReference type="ChEBI" id="CHEBI:28304"/>
    </ligand>
</feature>
<feature type="glycosylation site" description="N-linked (GlcNAc...) asparagine" evidence="2">
    <location>
        <position position="157"/>
    </location>
</feature>
<feature type="glycosylation site" description="N-linked (GlcNAc...) asparagine" evidence="2">
    <location>
        <position position="244"/>
    </location>
</feature>
<feature type="glycosylation site" description="N-linked (GlcNAc...) asparagine" evidence="2">
    <location>
        <position position="317"/>
    </location>
</feature>
<feature type="glycosylation site" description="N-linked (GlcNAc...) asparagine" evidence="2">
    <location>
        <position position="322"/>
    </location>
</feature>
<feature type="glycosylation site" description="N-linked (GlcNAc...) asparagine" evidence="2">
    <location>
        <position position="463"/>
    </location>
</feature>
<feature type="glycosylation site" description="N-linked (GlcNAc...) asparagine" evidence="2">
    <location>
        <position position="590"/>
    </location>
</feature>
<feature type="glycosylation site" description="N-linked (GlcNAc...) asparagine" evidence="2">
    <location>
        <position position="716"/>
    </location>
</feature>
<feature type="glycosylation site" description="N-linked (GlcNAc...) asparagine" evidence="2">
    <location>
        <position position="1075"/>
    </location>
</feature>
<feature type="disulfide bond" description="Interchain" evidence="1">
    <location>
        <position position="272"/>
    </location>
</feature>
<feature type="disulfide bond" description="Interchain" evidence="1">
    <location>
        <position position="276"/>
    </location>
</feature>
<feature type="disulfide bond" evidence="1">
    <location>
        <begin position="399"/>
        <end position="431"/>
    </location>
</feature>
<feature type="disulfide bond" evidence="1">
    <location>
        <begin position="403"/>
        <end position="436"/>
    </location>
</feature>
<feature type="disulfide bond" evidence="1">
    <location>
        <begin position="414"/>
        <end position="421"/>
    </location>
</feature>
<feature type="disulfide bond" evidence="1">
    <location>
        <begin position="455"/>
        <end position="492"/>
    </location>
</feature>
<feature type="disulfide bond" evidence="1">
    <location>
        <begin position="459"/>
        <end position="497"/>
    </location>
</feature>
<feature type="disulfide bond" evidence="1">
    <location>
        <begin position="470"/>
        <end position="482"/>
    </location>
</feature>
<feature type="disulfide bond" evidence="1">
    <location>
        <begin position="512"/>
        <end position="549"/>
    </location>
</feature>
<feature type="disulfide bond" evidence="1">
    <location>
        <begin position="516"/>
        <end position="554"/>
    </location>
</feature>
<feature type="disulfide bond" evidence="1">
    <location>
        <begin position="527"/>
        <end position="539"/>
    </location>
</feature>
<feature type="disulfide bond" evidence="1">
    <location>
        <begin position="559"/>
        <end position="570"/>
    </location>
</feature>
<feature type="disulfide bond" evidence="1">
    <location>
        <begin position="564"/>
        <end position="580"/>
    </location>
</feature>
<feature type="disulfide bond" evidence="1">
    <location>
        <begin position="583"/>
        <end position="594"/>
    </location>
</feature>
<feature type="disulfide bond" evidence="1">
    <location>
        <begin position="600"/>
        <end position="616"/>
    </location>
</feature>
<feature type="disulfide bond" evidence="1">
    <location>
        <begin position="607"/>
        <end position="625"/>
    </location>
</feature>
<feature type="disulfide bond" evidence="1">
    <location>
        <begin position="628"/>
        <end position="652"/>
    </location>
</feature>
<feature type="disulfide bond" evidence="1">
    <location>
        <begin position="658"/>
        <end position="671"/>
    </location>
</feature>
<feature type="disulfide bond" evidence="1">
    <location>
        <begin position="665"/>
        <end position="684"/>
    </location>
</feature>
<feature type="disulfide bond" evidence="1">
    <location>
        <begin position="686"/>
        <end position="697"/>
    </location>
</feature>
<feature type="disulfide bond" evidence="1">
    <location>
        <begin position="713"/>
        <end position="721"/>
    </location>
</feature>
<feature type="disulfide bond" evidence="1">
    <location>
        <begin position="726"/>
        <end position="746"/>
    </location>
</feature>
<feature type="disulfide bond" evidence="1">
    <location>
        <begin position="762"/>
        <end position="782"/>
    </location>
</feature>
<feature type="disulfide bond" evidence="1">
    <location>
        <begin position="785"/>
        <end position="805"/>
    </location>
</feature>
<feature type="disulfide bond" evidence="1">
    <location>
        <begin position="821"/>
        <end position="841"/>
    </location>
</feature>
<feature type="disulfide bond" evidence="1">
    <location>
        <begin position="844"/>
        <end position="864"/>
    </location>
</feature>
<feature type="disulfide bond" evidence="1">
    <location>
        <begin position="882"/>
        <end position="902"/>
    </location>
</feature>
<feature type="disulfide bond" evidence="1">
    <location>
        <begin position="918"/>
        <end position="938"/>
    </location>
</feature>
<feature type="disulfide bond" evidence="1">
    <location>
        <begin position="954"/>
        <end position="1175"/>
    </location>
</feature>
<reference key="1">
    <citation type="journal article" date="1991" name="J. Biol. Chem.">
        <title>Cloning and sequencing of chicken thrombospondin.</title>
        <authorList>
            <person name="Lawler J."/>
            <person name="Duquette M."/>
            <person name="Ferro P."/>
        </authorList>
    </citation>
    <scope>NUCLEOTIDE SEQUENCE [MRNA]</scope>
</reference>
<comment type="function">
    <text evidence="1">Adhesive glycoprotein that mediates cell-to-cell and cell-to-matrix interactions.</text>
</comment>
<comment type="subunit">
    <text evidence="1">Homotrimer; disulfide-linked. Can bind to fibrinogen, fibronectin, laminin and type V collagen (By similarity).</text>
</comment>
<comment type="similarity">
    <text evidence="8">Belongs to the thrombospondin family.</text>
</comment>
<organism>
    <name type="scientific">Gallus gallus</name>
    <name type="common">Chicken</name>
    <dbReference type="NCBI Taxonomy" id="9031"/>
    <lineage>
        <taxon>Eukaryota</taxon>
        <taxon>Metazoa</taxon>
        <taxon>Chordata</taxon>
        <taxon>Craniata</taxon>
        <taxon>Vertebrata</taxon>
        <taxon>Euteleostomi</taxon>
        <taxon>Archelosauria</taxon>
        <taxon>Archosauria</taxon>
        <taxon>Dinosauria</taxon>
        <taxon>Saurischia</taxon>
        <taxon>Theropoda</taxon>
        <taxon>Coelurosauria</taxon>
        <taxon>Aves</taxon>
        <taxon>Neognathae</taxon>
        <taxon>Galloanserae</taxon>
        <taxon>Galliformes</taxon>
        <taxon>Phasianidae</taxon>
        <taxon>Phasianinae</taxon>
        <taxon>Gallus</taxon>
    </lineage>
</organism>
<keyword id="KW-0106">Calcium</keyword>
<keyword id="KW-0130">Cell adhesion</keyword>
<keyword id="KW-1015">Disulfide bond</keyword>
<keyword id="KW-0245">EGF-like domain</keyword>
<keyword id="KW-0325">Glycoprotein</keyword>
<keyword id="KW-0358">Heparin-binding</keyword>
<keyword id="KW-1185">Reference proteome</keyword>
<keyword id="KW-0677">Repeat</keyword>
<keyword id="KW-0732">Signal</keyword>
<name>TSP2_CHICK</name>
<evidence type="ECO:0000250" key="1"/>
<evidence type="ECO:0000255" key="2"/>
<evidence type="ECO:0000255" key="3">
    <source>
        <dbReference type="PROSITE-ProRule" id="PRU00076"/>
    </source>
</evidence>
<evidence type="ECO:0000255" key="4">
    <source>
        <dbReference type="PROSITE-ProRule" id="PRU00210"/>
    </source>
</evidence>
<evidence type="ECO:0000255" key="5">
    <source>
        <dbReference type="PROSITE-ProRule" id="PRU00220"/>
    </source>
</evidence>
<evidence type="ECO:0000255" key="6">
    <source>
        <dbReference type="PROSITE-ProRule" id="PRU00635"/>
    </source>
</evidence>
<evidence type="ECO:0000256" key="7">
    <source>
        <dbReference type="SAM" id="MobiDB-lite"/>
    </source>
</evidence>
<evidence type="ECO:0000305" key="8"/>
<dbReference type="EMBL" id="M60853">
    <property type="protein sequence ID" value="AAA51437.1"/>
    <property type="molecule type" value="mRNA"/>
</dbReference>
<dbReference type="PIR" id="A39804">
    <property type="entry name" value="A39804"/>
</dbReference>
<dbReference type="RefSeq" id="NP_001001755.1">
    <property type="nucleotide sequence ID" value="NM_001001755.1"/>
</dbReference>
<dbReference type="RefSeq" id="XP_015139539.1">
    <property type="nucleotide sequence ID" value="XM_015284053.1"/>
</dbReference>
<dbReference type="SMR" id="P35440"/>
<dbReference type="FunCoup" id="P35440">
    <property type="interactions" value="168"/>
</dbReference>
<dbReference type="STRING" id="9031.ENSGALP00000073192"/>
<dbReference type="GlyCosmos" id="P35440">
    <property type="glycosylation" value="8 sites, No reported glycans"/>
</dbReference>
<dbReference type="GlyGen" id="P35440">
    <property type="glycosylation" value="8 sites"/>
</dbReference>
<dbReference type="PaxDb" id="9031-ENSGALP00000018239"/>
<dbReference type="KEGG" id="gga:414837"/>
<dbReference type="VEuPathDB" id="HostDB:geneid_414837"/>
<dbReference type="eggNOG" id="ENOG502QRK8">
    <property type="taxonomic scope" value="Eukaryota"/>
</dbReference>
<dbReference type="HOGENOM" id="CLU_009257_0_0_1"/>
<dbReference type="InParanoid" id="P35440"/>
<dbReference type="OrthoDB" id="14563at2759"/>
<dbReference type="PhylomeDB" id="P35440"/>
<dbReference type="PRO" id="PR:P35440"/>
<dbReference type="Proteomes" id="UP000000539">
    <property type="component" value="Unassembled WGS sequence"/>
</dbReference>
<dbReference type="GO" id="GO:0062023">
    <property type="term" value="C:collagen-containing extracellular matrix"/>
    <property type="evidence" value="ECO:0000318"/>
    <property type="project" value="GO_Central"/>
</dbReference>
<dbReference type="GO" id="GO:0005576">
    <property type="term" value="C:extracellular region"/>
    <property type="evidence" value="ECO:0007669"/>
    <property type="project" value="InterPro"/>
</dbReference>
<dbReference type="GO" id="GO:0005509">
    <property type="term" value="F:calcium ion binding"/>
    <property type="evidence" value="ECO:0007669"/>
    <property type="project" value="InterPro"/>
</dbReference>
<dbReference type="GO" id="GO:0008201">
    <property type="term" value="F:heparin binding"/>
    <property type="evidence" value="ECO:0007669"/>
    <property type="project" value="UniProtKB-KW"/>
</dbReference>
<dbReference type="GO" id="GO:0007155">
    <property type="term" value="P:cell adhesion"/>
    <property type="evidence" value="ECO:0007669"/>
    <property type="project" value="UniProtKB-KW"/>
</dbReference>
<dbReference type="GO" id="GO:0016525">
    <property type="term" value="P:negative regulation of angiogenesis"/>
    <property type="evidence" value="ECO:0000318"/>
    <property type="project" value="GO_Central"/>
</dbReference>
<dbReference type="FunFam" id="2.20.100.10:FF:000004">
    <property type="entry name" value="Adhesion G protein-coupled receptor B2"/>
    <property type="match status" value="1"/>
</dbReference>
<dbReference type="FunFam" id="2.20.100.10:FF:000007">
    <property type="entry name" value="Thrombospondin 1"/>
    <property type="match status" value="2"/>
</dbReference>
<dbReference type="FunFam" id="2.60.120.200:FF:000009">
    <property type="entry name" value="Thrombospondin 1"/>
    <property type="match status" value="1"/>
</dbReference>
<dbReference type="FunFam" id="2.10.25.10:FF:000070">
    <property type="entry name" value="Thrombospondin 2"/>
    <property type="match status" value="1"/>
</dbReference>
<dbReference type="FunFam" id="2.60.120.200:FF:000067">
    <property type="entry name" value="Thrombospondin 2"/>
    <property type="match status" value="1"/>
</dbReference>
<dbReference type="FunFam" id="4.10.1080.10:FF:000003">
    <property type="entry name" value="Thrombospondin 2"/>
    <property type="match status" value="1"/>
</dbReference>
<dbReference type="FunFam" id="2.10.25.10:FF:000025">
    <property type="entry name" value="Thrombospondin 3"/>
    <property type="match status" value="1"/>
</dbReference>
<dbReference type="FunFam" id="2.10.25.10:FF:000027">
    <property type="entry name" value="Thrombospondin 3"/>
    <property type="match status" value="1"/>
</dbReference>
<dbReference type="FunFam" id="4.10.1080.10:FF:000001">
    <property type="entry name" value="Thrombospondin 3"/>
    <property type="match status" value="1"/>
</dbReference>
<dbReference type="Gene3D" id="2.60.120.200">
    <property type="match status" value="2"/>
</dbReference>
<dbReference type="Gene3D" id="6.20.200.20">
    <property type="match status" value="1"/>
</dbReference>
<dbReference type="Gene3D" id="2.10.25.10">
    <property type="entry name" value="Laminin"/>
    <property type="match status" value="3"/>
</dbReference>
<dbReference type="Gene3D" id="2.20.100.10">
    <property type="entry name" value="Thrombospondin type-1 (TSP1) repeat"/>
    <property type="match status" value="3"/>
</dbReference>
<dbReference type="Gene3D" id="4.10.1080.10">
    <property type="entry name" value="TSP type-3 repeat"/>
    <property type="match status" value="2"/>
</dbReference>
<dbReference type="InterPro" id="IPR013320">
    <property type="entry name" value="ConA-like_dom_sf"/>
</dbReference>
<dbReference type="InterPro" id="IPR001881">
    <property type="entry name" value="EGF-like_Ca-bd_dom"/>
</dbReference>
<dbReference type="InterPro" id="IPR000742">
    <property type="entry name" value="EGF-like_dom"/>
</dbReference>
<dbReference type="InterPro" id="IPR024731">
    <property type="entry name" value="EGF_dom"/>
</dbReference>
<dbReference type="InterPro" id="IPR003367">
    <property type="entry name" value="Thrombospondin_3-like_rpt"/>
</dbReference>
<dbReference type="InterPro" id="IPR017897">
    <property type="entry name" value="Thrombospondin_3_rpt"/>
</dbReference>
<dbReference type="InterPro" id="IPR008859">
    <property type="entry name" value="Thrombospondin_C"/>
</dbReference>
<dbReference type="InterPro" id="IPR000884">
    <property type="entry name" value="TSP1_rpt"/>
</dbReference>
<dbReference type="InterPro" id="IPR036383">
    <property type="entry name" value="TSP1_rpt_sf"/>
</dbReference>
<dbReference type="InterPro" id="IPR028974">
    <property type="entry name" value="TSP_type-3_rpt"/>
</dbReference>
<dbReference type="InterPro" id="IPR048287">
    <property type="entry name" value="TSPN-like_N"/>
</dbReference>
<dbReference type="InterPro" id="IPR001007">
    <property type="entry name" value="VWF_dom"/>
</dbReference>
<dbReference type="PANTHER" id="PTHR10199">
    <property type="entry name" value="THROMBOSPONDIN"/>
    <property type="match status" value="1"/>
</dbReference>
<dbReference type="PANTHER" id="PTHR10199:SF10">
    <property type="entry name" value="THROMBOSPONDIN-2"/>
    <property type="match status" value="1"/>
</dbReference>
<dbReference type="Pfam" id="PF12947">
    <property type="entry name" value="EGF_3"/>
    <property type="match status" value="1"/>
</dbReference>
<dbReference type="Pfam" id="PF00090">
    <property type="entry name" value="TSP_1"/>
    <property type="match status" value="3"/>
</dbReference>
<dbReference type="Pfam" id="PF02412">
    <property type="entry name" value="TSP_3"/>
    <property type="match status" value="7"/>
</dbReference>
<dbReference type="Pfam" id="PF05735">
    <property type="entry name" value="TSP_C"/>
    <property type="match status" value="1"/>
</dbReference>
<dbReference type="Pfam" id="PF00093">
    <property type="entry name" value="VWC"/>
    <property type="match status" value="1"/>
</dbReference>
<dbReference type="PRINTS" id="PR01705">
    <property type="entry name" value="TSP1REPEAT"/>
</dbReference>
<dbReference type="SMART" id="SM00181">
    <property type="entry name" value="EGF"/>
    <property type="match status" value="3"/>
</dbReference>
<dbReference type="SMART" id="SM00179">
    <property type="entry name" value="EGF_CA"/>
    <property type="match status" value="2"/>
</dbReference>
<dbReference type="SMART" id="SM00209">
    <property type="entry name" value="TSP1"/>
    <property type="match status" value="3"/>
</dbReference>
<dbReference type="SMART" id="SM00210">
    <property type="entry name" value="TSPN"/>
    <property type="match status" value="1"/>
</dbReference>
<dbReference type="SMART" id="SM00214">
    <property type="entry name" value="VWC"/>
    <property type="match status" value="1"/>
</dbReference>
<dbReference type="SUPFAM" id="SSF49899">
    <property type="entry name" value="Concanavalin A-like lectins/glucanases"/>
    <property type="match status" value="2"/>
</dbReference>
<dbReference type="SUPFAM" id="SSF57196">
    <property type="entry name" value="EGF/Laminin"/>
    <property type="match status" value="1"/>
</dbReference>
<dbReference type="SUPFAM" id="SSF57603">
    <property type="entry name" value="FnI-like domain"/>
    <property type="match status" value="1"/>
</dbReference>
<dbReference type="SUPFAM" id="SSF103647">
    <property type="entry name" value="TSP type-3 repeat"/>
    <property type="match status" value="3"/>
</dbReference>
<dbReference type="SUPFAM" id="SSF82895">
    <property type="entry name" value="TSP-1 type 1 repeat"/>
    <property type="match status" value="3"/>
</dbReference>
<dbReference type="PROSITE" id="PS01186">
    <property type="entry name" value="EGF_2"/>
    <property type="match status" value="1"/>
</dbReference>
<dbReference type="PROSITE" id="PS50026">
    <property type="entry name" value="EGF_3"/>
    <property type="match status" value="2"/>
</dbReference>
<dbReference type="PROSITE" id="PS50092">
    <property type="entry name" value="TSP1"/>
    <property type="match status" value="3"/>
</dbReference>
<dbReference type="PROSITE" id="PS51234">
    <property type="entry name" value="TSP3"/>
    <property type="match status" value="8"/>
</dbReference>
<dbReference type="PROSITE" id="PS51236">
    <property type="entry name" value="TSP_CTER"/>
    <property type="match status" value="1"/>
</dbReference>
<dbReference type="PROSITE" id="PS01208">
    <property type="entry name" value="VWFC_1"/>
    <property type="match status" value="1"/>
</dbReference>
<dbReference type="PROSITE" id="PS50184">
    <property type="entry name" value="VWFC_2"/>
    <property type="match status" value="1"/>
</dbReference>